<proteinExistence type="inferred from homology"/>
<accession>Q646F9</accession>
<keyword id="KW-0297">G-protein coupled receptor</keyword>
<keyword id="KW-0325">Glycoprotein</keyword>
<keyword id="KW-0472">Membrane</keyword>
<keyword id="KW-0675">Receptor</keyword>
<keyword id="KW-0716">Sensory transduction</keyword>
<keyword id="KW-0919">Taste</keyword>
<keyword id="KW-0807">Transducer</keyword>
<keyword id="KW-0812">Transmembrane</keyword>
<keyword id="KW-1133">Transmembrane helix</keyword>
<gene>
    <name type="primary">TAS2R31</name>
    <name type="synonym">TAS2R44</name>
</gene>
<sequence>MITFLPIIFSILVVVTFVIGNFANGFIALVNSTEWVKRQKISFADQILTALAVSRVGLLWVLLLNWYATVLNPAFYSVEVRTTTYNVWAVTNHFSNWLATSLSIFYLLKIANFSNLIFLHLKRRVKNVILVMLLGPLLILACHLFMVNMNEIVRTKEYEENMTWKYILRNAIYHPGMTVTTLQNLVPFTLTLISFLLLICSLCKHLKKMQLHGKGPQDPSTKVHIKALQIVISFLLLCVIYFVSVIISIWSFESLGNKPVFMFCQAIRFSYPSAHPFIVIWGNKKLKQTFLSVLWNVRYWVKGQKPSSL</sequence>
<organism>
    <name type="scientific">Papio hamadryas</name>
    <name type="common">Hamadryas baboon</name>
    <dbReference type="NCBI Taxonomy" id="9557"/>
    <lineage>
        <taxon>Eukaryota</taxon>
        <taxon>Metazoa</taxon>
        <taxon>Chordata</taxon>
        <taxon>Craniata</taxon>
        <taxon>Vertebrata</taxon>
        <taxon>Euteleostomi</taxon>
        <taxon>Mammalia</taxon>
        <taxon>Eutheria</taxon>
        <taxon>Euarchontoglires</taxon>
        <taxon>Primates</taxon>
        <taxon>Haplorrhini</taxon>
        <taxon>Catarrhini</taxon>
        <taxon>Cercopithecidae</taxon>
        <taxon>Cercopithecinae</taxon>
        <taxon>Papio</taxon>
    </lineage>
</organism>
<protein>
    <recommendedName>
        <fullName>Taste receptor type 2 member 31</fullName>
        <shortName>T2R31</shortName>
    </recommendedName>
    <alternativeName>
        <fullName>Taste receptor type 2 member 44</fullName>
        <shortName>T2R44</shortName>
    </alternativeName>
</protein>
<feature type="chain" id="PRO_0000082312" description="Taste receptor type 2 member 31">
    <location>
        <begin position="1"/>
        <end position="309"/>
    </location>
</feature>
<feature type="topological domain" description="Extracellular" evidence="2">
    <location>
        <begin position="1"/>
        <end position="2"/>
    </location>
</feature>
<feature type="transmembrane region" description="Helical; Name=1" evidence="2">
    <location>
        <begin position="3"/>
        <end position="23"/>
    </location>
</feature>
<feature type="topological domain" description="Cytoplasmic" evidence="2">
    <location>
        <begin position="24"/>
        <end position="55"/>
    </location>
</feature>
<feature type="transmembrane region" description="Helical; Name=2" evidence="2">
    <location>
        <begin position="56"/>
        <end position="76"/>
    </location>
</feature>
<feature type="topological domain" description="Extracellular" evidence="2">
    <location>
        <begin position="77"/>
        <end position="100"/>
    </location>
</feature>
<feature type="transmembrane region" description="Helical; Name=3" evidence="2">
    <location>
        <begin position="101"/>
        <end position="121"/>
    </location>
</feature>
<feature type="topological domain" description="Cytoplasmic" evidence="2">
    <location>
        <begin position="122"/>
        <end position="126"/>
    </location>
</feature>
<feature type="transmembrane region" description="Helical; Name=4" evidence="2">
    <location>
        <begin position="127"/>
        <end position="147"/>
    </location>
</feature>
<feature type="topological domain" description="Extracellular" evidence="2">
    <location>
        <begin position="148"/>
        <end position="181"/>
    </location>
</feature>
<feature type="transmembrane region" description="Helical; Name=5" evidence="2">
    <location>
        <begin position="182"/>
        <end position="202"/>
    </location>
</feature>
<feature type="topological domain" description="Cytoplasmic" evidence="2">
    <location>
        <begin position="203"/>
        <end position="229"/>
    </location>
</feature>
<feature type="transmembrane region" description="Helical; Name=6" evidence="2">
    <location>
        <begin position="230"/>
        <end position="250"/>
    </location>
</feature>
<feature type="topological domain" description="Extracellular" evidence="2">
    <location>
        <begin position="251"/>
        <end position="259"/>
    </location>
</feature>
<feature type="transmembrane region" description="Helical; Name=7" evidence="2">
    <location>
        <begin position="260"/>
        <end position="280"/>
    </location>
</feature>
<feature type="topological domain" description="Cytoplasmic" evidence="2">
    <location>
        <begin position="281"/>
        <end position="309"/>
    </location>
</feature>
<feature type="glycosylation site" description="N-linked (GlcNAc...) asparagine" evidence="2">
    <location>
        <position position="161"/>
    </location>
</feature>
<reference key="1">
    <citation type="journal article" date="2005" name="Mol. Biol. Evol.">
        <title>Evolution of bitter taste receptors in humans and apes.</title>
        <authorList>
            <person name="Fischer A."/>
            <person name="Gilad Y."/>
            <person name="Man O."/>
            <person name="Paeaebo S."/>
        </authorList>
    </citation>
    <scope>NUCLEOTIDE SEQUENCE [GENOMIC DNA]</scope>
</reference>
<name>T2R31_PAPHA</name>
<comment type="function">
    <text evidence="1">Receptor that may play a role in the perception of bitterness and is gustducin-linked. May play a role in sensing the chemical composition of the gastrointestinal content. The activity of this receptor may stimulate alpha gustducin, mediate PLC-beta-2 activation and lead to the gating of TRPM5 (By similarity).</text>
</comment>
<comment type="subcellular location">
    <subcellularLocation>
        <location>Membrane</location>
        <topology>Multi-pass membrane protein</topology>
    </subcellularLocation>
</comment>
<comment type="miscellaneous">
    <text>Most taste cells may be activated by a limited number of bitter compounds; individual taste cells can discriminate among bitter stimuli.</text>
</comment>
<comment type="similarity">
    <text evidence="3">Belongs to the G-protein coupled receptor T2R family.</text>
</comment>
<dbReference type="EMBL" id="AY724823">
    <property type="protein sequence ID" value="AAU21060.1"/>
    <property type="molecule type" value="Genomic_DNA"/>
</dbReference>
<dbReference type="SMR" id="Q646F9"/>
<dbReference type="GlyCosmos" id="Q646F9">
    <property type="glycosylation" value="1 site, No reported glycans"/>
</dbReference>
<dbReference type="GO" id="GO:0005886">
    <property type="term" value="C:plasma membrane"/>
    <property type="evidence" value="ECO:0007669"/>
    <property type="project" value="UniProtKB-ARBA"/>
</dbReference>
<dbReference type="GO" id="GO:0033038">
    <property type="term" value="F:bitter taste receptor activity"/>
    <property type="evidence" value="ECO:0007669"/>
    <property type="project" value="InterPro"/>
</dbReference>
<dbReference type="GO" id="GO:0004930">
    <property type="term" value="F:G protein-coupled receptor activity"/>
    <property type="evidence" value="ECO:0007669"/>
    <property type="project" value="UniProtKB-KW"/>
</dbReference>
<dbReference type="CDD" id="cd15027">
    <property type="entry name" value="7tm_TAS2R43-like"/>
    <property type="match status" value="1"/>
</dbReference>
<dbReference type="FunFam" id="1.20.1070.10:FF:000042">
    <property type="entry name" value="Taste receptor type 2 member 7"/>
    <property type="match status" value="1"/>
</dbReference>
<dbReference type="Gene3D" id="1.20.1070.10">
    <property type="entry name" value="Rhodopsin 7-helix transmembrane proteins"/>
    <property type="match status" value="1"/>
</dbReference>
<dbReference type="InterPro" id="IPR007960">
    <property type="entry name" value="TAS2R"/>
</dbReference>
<dbReference type="PANTHER" id="PTHR11394">
    <property type="entry name" value="TASTE RECEPTOR TYPE 2"/>
    <property type="match status" value="1"/>
</dbReference>
<dbReference type="PANTHER" id="PTHR11394:SF27">
    <property type="entry name" value="TASTE RECEPTOR TYPE 2 MEMBER 20"/>
    <property type="match status" value="1"/>
</dbReference>
<dbReference type="Pfam" id="PF05296">
    <property type="entry name" value="TAS2R"/>
    <property type="match status" value="1"/>
</dbReference>
<dbReference type="SUPFAM" id="SSF81321">
    <property type="entry name" value="Family A G protein-coupled receptor-like"/>
    <property type="match status" value="1"/>
</dbReference>
<evidence type="ECO:0000250" key="1"/>
<evidence type="ECO:0000255" key="2"/>
<evidence type="ECO:0000305" key="3"/>